<keyword id="KW-0027">Amidation</keyword>
<keyword id="KW-0165">Cleavage on pair of basic residues</keyword>
<keyword id="KW-0372">Hormone</keyword>
<keyword id="KW-0527">Neuropeptide</keyword>
<keyword id="KW-0964">Secreted</keyword>
<keyword id="KW-0732">Signal</keyword>
<reference key="1">
    <citation type="journal article" date="2004" name="Aquaculture">
        <title>Development of endocrine system regulating exocrine pancreas and estimation of feeding and digestive ability in Japanese eel larvae.</title>
        <authorList>
            <person name="Kurokawa T."/>
            <person name="Iinuma N."/>
            <person name="Unuma T."/>
            <person name="Tanaka H."/>
            <person name="Kagawa H."/>
            <person name="Ohta H."/>
            <person name="Suzuki T."/>
        </authorList>
        <dbReference type="AGRICOLA" id="IND43623806"/>
    </citation>
    <scope>NUCLEOTIDE SEQUENCE [MRNA]</scope>
    <source>
        <tissue>Intestine</tissue>
    </source>
</reference>
<evidence type="ECO:0000250" key="1"/>
<evidence type="ECO:0000255" key="2"/>
<evidence type="ECO:0000305" key="3"/>
<feature type="signal peptide" evidence="2">
    <location>
        <begin position="1"/>
        <end position="28"/>
    </location>
</feature>
<feature type="peptide" id="PRO_0000025393" description="Peptide YY">
    <location>
        <begin position="29"/>
        <end position="64"/>
    </location>
</feature>
<feature type="propeptide" id="PRO_0000025394" description="C-terminal extension" evidence="1">
    <location>
        <begin position="68"/>
        <end position="97"/>
    </location>
</feature>
<feature type="modified residue" description="Tyrosine amide" evidence="2">
    <location>
        <position position="64"/>
    </location>
</feature>
<dbReference type="EMBL" id="AB109557">
    <property type="protein sequence ID" value="BAD01501.1"/>
    <property type="molecule type" value="mRNA"/>
</dbReference>
<dbReference type="GO" id="GO:0005615">
    <property type="term" value="C:extracellular space"/>
    <property type="evidence" value="ECO:0007669"/>
    <property type="project" value="TreeGrafter"/>
</dbReference>
<dbReference type="GO" id="GO:0005184">
    <property type="term" value="F:neuropeptide hormone activity"/>
    <property type="evidence" value="ECO:0007669"/>
    <property type="project" value="TreeGrafter"/>
</dbReference>
<dbReference type="GO" id="GO:0031841">
    <property type="term" value="F:neuropeptide Y receptor binding"/>
    <property type="evidence" value="ECO:0007669"/>
    <property type="project" value="TreeGrafter"/>
</dbReference>
<dbReference type="GO" id="GO:0007631">
    <property type="term" value="P:feeding behavior"/>
    <property type="evidence" value="ECO:0007669"/>
    <property type="project" value="TreeGrafter"/>
</dbReference>
<dbReference type="GO" id="GO:0007218">
    <property type="term" value="P:neuropeptide signaling pathway"/>
    <property type="evidence" value="ECO:0007669"/>
    <property type="project" value="UniProtKB-KW"/>
</dbReference>
<dbReference type="CDD" id="cd00126">
    <property type="entry name" value="PAH"/>
    <property type="match status" value="1"/>
</dbReference>
<dbReference type="Gene3D" id="6.10.250.900">
    <property type="match status" value="1"/>
</dbReference>
<dbReference type="InterPro" id="IPR001955">
    <property type="entry name" value="Pancreatic_hormone-like"/>
</dbReference>
<dbReference type="InterPro" id="IPR020392">
    <property type="entry name" value="Pancreatic_hormone-like_CS"/>
</dbReference>
<dbReference type="PANTHER" id="PTHR10533">
    <property type="entry name" value="NEUROPEPTIDE Y/PANCREATIC HORMONE/PEPTIDE YY"/>
    <property type="match status" value="1"/>
</dbReference>
<dbReference type="PANTHER" id="PTHR10533:SF14">
    <property type="entry name" value="PEPTIDE YY-RELATED"/>
    <property type="match status" value="1"/>
</dbReference>
<dbReference type="Pfam" id="PF00159">
    <property type="entry name" value="Hormone_3"/>
    <property type="match status" value="1"/>
</dbReference>
<dbReference type="PRINTS" id="PR00278">
    <property type="entry name" value="PANCHORMONE"/>
</dbReference>
<dbReference type="SMART" id="SM00309">
    <property type="entry name" value="PAH"/>
    <property type="match status" value="1"/>
</dbReference>
<dbReference type="PROSITE" id="PS00265">
    <property type="entry name" value="PANCREATIC_HORMONE_1"/>
    <property type="match status" value="1"/>
</dbReference>
<dbReference type="PROSITE" id="PS50276">
    <property type="entry name" value="PANCREATIC_HORMONE_2"/>
    <property type="match status" value="1"/>
</dbReference>
<sequence length="97" mass="11141">MAVVLKPWTVLVALVLCLLVCLGTFVDAYPPKPENPGEDASPEEQAKYYTALRHYINLITRQRYGKRSSPEGVMSELLFGDNSEHNQRSRYDDSYMW</sequence>
<proteinExistence type="inferred from homology"/>
<protein>
    <recommendedName>
        <fullName>Peptide YY</fullName>
    </recommendedName>
</protein>
<gene>
    <name type="primary">pyy</name>
</gene>
<organism>
    <name type="scientific">Anguilla japonica</name>
    <name type="common">Japanese eel</name>
    <dbReference type="NCBI Taxonomy" id="7937"/>
    <lineage>
        <taxon>Eukaryota</taxon>
        <taxon>Metazoa</taxon>
        <taxon>Chordata</taxon>
        <taxon>Craniata</taxon>
        <taxon>Vertebrata</taxon>
        <taxon>Euteleostomi</taxon>
        <taxon>Actinopterygii</taxon>
        <taxon>Neopterygii</taxon>
        <taxon>Teleostei</taxon>
        <taxon>Anguilliformes</taxon>
        <taxon>Anguillidae</taxon>
        <taxon>Anguilla</taxon>
    </lineage>
</organism>
<name>PYY_ANGJA</name>
<comment type="subcellular location">
    <subcellularLocation>
        <location evidence="1">Secreted</location>
    </subcellularLocation>
</comment>
<comment type="similarity">
    <text evidence="3">Belongs to the NPY family.</text>
</comment>
<accession>Q76CL2</accession>